<feature type="chain" id="PRO_1000139518" description="CTP synthase">
    <location>
        <begin position="1"/>
        <end position="553"/>
    </location>
</feature>
<feature type="domain" description="Glutamine amidotransferase type-1" evidence="1">
    <location>
        <begin position="295"/>
        <end position="547"/>
    </location>
</feature>
<feature type="region of interest" description="Amidoligase domain" evidence="1">
    <location>
        <begin position="1"/>
        <end position="270"/>
    </location>
</feature>
<feature type="active site" description="Nucleophile; for glutamine hydrolysis" evidence="1">
    <location>
        <position position="383"/>
    </location>
</feature>
<feature type="active site" evidence="1">
    <location>
        <position position="520"/>
    </location>
</feature>
<feature type="active site" evidence="1">
    <location>
        <position position="522"/>
    </location>
</feature>
<feature type="binding site" evidence="1">
    <location>
        <position position="13"/>
    </location>
    <ligand>
        <name>CTP</name>
        <dbReference type="ChEBI" id="CHEBI:37563"/>
        <note>allosteric inhibitor</note>
    </ligand>
</feature>
<feature type="binding site" evidence="1">
    <location>
        <position position="13"/>
    </location>
    <ligand>
        <name>UTP</name>
        <dbReference type="ChEBI" id="CHEBI:46398"/>
    </ligand>
</feature>
<feature type="binding site" evidence="1">
    <location>
        <begin position="14"/>
        <end position="19"/>
    </location>
    <ligand>
        <name>ATP</name>
        <dbReference type="ChEBI" id="CHEBI:30616"/>
    </ligand>
</feature>
<feature type="binding site" evidence="1">
    <location>
        <position position="71"/>
    </location>
    <ligand>
        <name>ATP</name>
        <dbReference type="ChEBI" id="CHEBI:30616"/>
    </ligand>
</feature>
<feature type="binding site" evidence="1">
    <location>
        <position position="71"/>
    </location>
    <ligand>
        <name>Mg(2+)</name>
        <dbReference type="ChEBI" id="CHEBI:18420"/>
    </ligand>
</feature>
<feature type="binding site" evidence="1">
    <location>
        <position position="144"/>
    </location>
    <ligand>
        <name>Mg(2+)</name>
        <dbReference type="ChEBI" id="CHEBI:18420"/>
    </ligand>
</feature>
<feature type="binding site" evidence="1">
    <location>
        <begin position="151"/>
        <end position="153"/>
    </location>
    <ligand>
        <name>CTP</name>
        <dbReference type="ChEBI" id="CHEBI:37563"/>
        <note>allosteric inhibitor</note>
    </ligand>
</feature>
<feature type="binding site" evidence="1">
    <location>
        <begin position="191"/>
        <end position="196"/>
    </location>
    <ligand>
        <name>CTP</name>
        <dbReference type="ChEBI" id="CHEBI:37563"/>
        <note>allosteric inhibitor</note>
    </ligand>
</feature>
<feature type="binding site" evidence="1">
    <location>
        <begin position="191"/>
        <end position="196"/>
    </location>
    <ligand>
        <name>UTP</name>
        <dbReference type="ChEBI" id="CHEBI:46398"/>
    </ligand>
</feature>
<feature type="binding site" evidence="1">
    <location>
        <position position="227"/>
    </location>
    <ligand>
        <name>CTP</name>
        <dbReference type="ChEBI" id="CHEBI:37563"/>
        <note>allosteric inhibitor</note>
    </ligand>
</feature>
<feature type="binding site" evidence="1">
    <location>
        <position position="227"/>
    </location>
    <ligand>
        <name>UTP</name>
        <dbReference type="ChEBI" id="CHEBI:46398"/>
    </ligand>
</feature>
<feature type="binding site" evidence="1">
    <location>
        <position position="356"/>
    </location>
    <ligand>
        <name>L-glutamine</name>
        <dbReference type="ChEBI" id="CHEBI:58359"/>
    </ligand>
</feature>
<feature type="binding site" evidence="1">
    <location>
        <begin position="384"/>
        <end position="387"/>
    </location>
    <ligand>
        <name>L-glutamine</name>
        <dbReference type="ChEBI" id="CHEBI:58359"/>
    </ligand>
</feature>
<feature type="binding site" evidence="1">
    <location>
        <position position="407"/>
    </location>
    <ligand>
        <name>L-glutamine</name>
        <dbReference type="ChEBI" id="CHEBI:58359"/>
    </ligand>
</feature>
<feature type="binding site" evidence="1">
    <location>
        <position position="473"/>
    </location>
    <ligand>
        <name>L-glutamine</name>
        <dbReference type="ChEBI" id="CHEBI:58359"/>
    </ligand>
</feature>
<organism>
    <name type="scientific">Polynucleobacter asymbioticus (strain DSM 18221 / CIP 109841 / QLW-P1DMWA-1)</name>
    <name type="common">Polynucleobacter necessarius subsp. asymbioticus</name>
    <dbReference type="NCBI Taxonomy" id="312153"/>
    <lineage>
        <taxon>Bacteria</taxon>
        <taxon>Pseudomonadati</taxon>
        <taxon>Pseudomonadota</taxon>
        <taxon>Betaproteobacteria</taxon>
        <taxon>Burkholderiales</taxon>
        <taxon>Burkholderiaceae</taxon>
        <taxon>Polynucleobacter</taxon>
    </lineage>
</organism>
<sequence>MTKYVFVTGGVVSSLGKGIAAASLAAILESRGLKVTLLKLDPYINVDPGTMSPLQHGEVFVTEDGAETDLDLGHYERFVSAKMRKSNNFTTGQIYESVISKERRGEYLGKTVQVIPHITNEIQAFVERGAKASHDGKADVAICEIGGTVGDIESLPFLEAARQMSLRLPLHSCAFVHLTLVPFISSAGELKTKPTQHSVQKLREIGIMPTVLLCRADRPIPNDERAKISLFSNVREEAVISVWDVDTIYKIPEMLQAQGMDDLICRELELNAKPADLSVWANLVYELANPKHEVTIGMVGKYVELTESYKSLIEALRHAGIHTHTRVNITYIDSEDIEKEGIDCLKDLDAILVPGGFGKRGTEGKIAAIRYARENQVPYLGICLGMQLAVIEFARHVANIVQANSTEFDADTESPVVALITEWLDREGRVEKRTNASDLGGTMRLGSQRCPVKPGTLAHRIYGAEVNERHRHRYEVNNTYVPKLEQSGLVISARTPNEMLPEMMELPDSMHPWFFGVQFHPEFTSTPRDGHPLFSAFIKAALIHQDATLKQVS</sequence>
<name>PYRG_POLAQ</name>
<proteinExistence type="inferred from homology"/>
<accession>A4SXE7</accession>
<dbReference type="EC" id="6.3.4.2" evidence="1"/>
<dbReference type="EMBL" id="CP000655">
    <property type="protein sequence ID" value="ABP34161.1"/>
    <property type="molecule type" value="Genomic_DNA"/>
</dbReference>
<dbReference type="RefSeq" id="WP_011902786.1">
    <property type="nucleotide sequence ID" value="NC_009379.1"/>
</dbReference>
<dbReference type="SMR" id="A4SXE7"/>
<dbReference type="MEROPS" id="C26.964"/>
<dbReference type="GeneID" id="31481313"/>
<dbReference type="KEGG" id="pnu:Pnuc_0945"/>
<dbReference type="eggNOG" id="COG0504">
    <property type="taxonomic scope" value="Bacteria"/>
</dbReference>
<dbReference type="HOGENOM" id="CLU_011675_5_0_4"/>
<dbReference type="UniPathway" id="UPA00159">
    <property type="reaction ID" value="UER00277"/>
</dbReference>
<dbReference type="Proteomes" id="UP000000231">
    <property type="component" value="Chromosome"/>
</dbReference>
<dbReference type="GO" id="GO:0005829">
    <property type="term" value="C:cytosol"/>
    <property type="evidence" value="ECO:0007669"/>
    <property type="project" value="TreeGrafter"/>
</dbReference>
<dbReference type="GO" id="GO:0005524">
    <property type="term" value="F:ATP binding"/>
    <property type="evidence" value="ECO:0007669"/>
    <property type="project" value="UniProtKB-KW"/>
</dbReference>
<dbReference type="GO" id="GO:0003883">
    <property type="term" value="F:CTP synthase activity"/>
    <property type="evidence" value="ECO:0007669"/>
    <property type="project" value="UniProtKB-UniRule"/>
</dbReference>
<dbReference type="GO" id="GO:0004359">
    <property type="term" value="F:glutaminase activity"/>
    <property type="evidence" value="ECO:0007669"/>
    <property type="project" value="RHEA"/>
</dbReference>
<dbReference type="GO" id="GO:0042802">
    <property type="term" value="F:identical protein binding"/>
    <property type="evidence" value="ECO:0007669"/>
    <property type="project" value="TreeGrafter"/>
</dbReference>
<dbReference type="GO" id="GO:0046872">
    <property type="term" value="F:metal ion binding"/>
    <property type="evidence" value="ECO:0007669"/>
    <property type="project" value="UniProtKB-KW"/>
</dbReference>
<dbReference type="GO" id="GO:0044210">
    <property type="term" value="P:'de novo' CTP biosynthetic process"/>
    <property type="evidence" value="ECO:0007669"/>
    <property type="project" value="UniProtKB-UniRule"/>
</dbReference>
<dbReference type="GO" id="GO:0019856">
    <property type="term" value="P:pyrimidine nucleobase biosynthetic process"/>
    <property type="evidence" value="ECO:0007669"/>
    <property type="project" value="TreeGrafter"/>
</dbReference>
<dbReference type="CDD" id="cd03113">
    <property type="entry name" value="CTPS_N"/>
    <property type="match status" value="1"/>
</dbReference>
<dbReference type="CDD" id="cd01746">
    <property type="entry name" value="GATase1_CTP_Synthase"/>
    <property type="match status" value="1"/>
</dbReference>
<dbReference type="FunFam" id="3.40.50.300:FF:000009">
    <property type="entry name" value="CTP synthase"/>
    <property type="match status" value="1"/>
</dbReference>
<dbReference type="FunFam" id="3.40.50.880:FF:000002">
    <property type="entry name" value="CTP synthase"/>
    <property type="match status" value="1"/>
</dbReference>
<dbReference type="Gene3D" id="3.40.50.880">
    <property type="match status" value="1"/>
</dbReference>
<dbReference type="Gene3D" id="3.40.50.300">
    <property type="entry name" value="P-loop containing nucleotide triphosphate hydrolases"/>
    <property type="match status" value="1"/>
</dbReference>
<dbReference type="HAMAP" id="MF_01227">
    <property type="entry name" value="PyrG"/>
    <property type="match status" value="1"/>
</dbReference>
<dbReference type="InterPro" id="IPR029062">
    <property type="entry name" value="Class_I_gatase-like"/>
</dbReference>
<dbReference type="InterPro" id="IPR004468">
    <property type="entry name" value="CTP_synthase"/>
</dbReference>
<dbReference type="InterPro" id="IPR017456">
    <property type="entry name" value="CTP_synthase_N"/>
</dbReference>
<dbReference type="InterPro" id="IPR017926">
    <property type="entry name" value="GATASE"/>
</dbReference>
<dbReference type="InterPro" id="IPR033828">
    <property type="entry name" value="GATase1_CTP_Synthase"/>
</dbReference>
<dbReference type="InterPro" id="IPR027417">
    <property type="entry name" value="P-loop_NTPase"/>
</dbReference>
<dbReference type="NCBIfam" id="NF003792">
    <property type="entry name" value="PRK05380.1"/>
    <property type="match status" value="1"/>
</dbReference>
<dbReference type="NCBIfam" id="TIGR00337">
    <property type="entry name" value="PyrG"/>
    <property type="match status" value="1"/>
</dbReference>
<dbReference type="PANTHER" id="PTHR11550">
    <property type="entry name" value="CTP SYNTHASE"/>
    <property type="match status" value="1"/>
</dbReference>
<dbReference type="PANTHER" id="PTHR11550:SF0">
    <property type="entry name" value="CTP SYNTHASE-RELATED"/>
    <property type="match status" value="1"/>
</dbReference>
<dbReference type="Pfam" id="PF06418">
    <property type="entry name" value="CTP_synth_N"/>
    <property type="match status" value="1"/>
</dbReference>
<dbReference type="Pfam" id="PF00117">
    <property type="entry name" value="GATase"/>
    <property type="match status" value="1"/>
</dbReference>
<dbReference type="SUPFAM" id="SSF52317">
    <property type="entry name" value="Class I glutamine amidotransferase-like"/>
    <property type="match status" value="1"/>
</dbReference>
<dbReference type="SUPFAM" id="SSF52540">
    <property type="entry name" value="P-loop containing nucleoside triphosphate hydrolases"/>
    <property type="match status" value="1"/>
</dbReference>
<dbReference type="PROSITE" id="PS51273">
    <property type="entry name" value="GATASE_TYPE_1"/>
    <property type="match status" value="1"/>
</dbReference>
<evidence type="ECO:0000255" key="1">
    <source>
        <dbReference type="HAMAP-Rule" id="MF_01227"/>
    </source>
</evidence>
<comment type="function">
    <text evidence="1">Catalyzes the ATP-dependent amination of UTP to CTP with either L-glutamine or ammonia as the source of nitrogen. Regulates intracellular CTP levels through interactions with the four ribonucleotide triphosphates.</text>
</comment>
<comment type="catalytic activity">
    <reaction evidence="1">
        <text>UTP + L-glutamine + ATP + H2O = CTP + L-glutamate + ADP + phosphate + 2 H(+)</text>
        <dbReference type="Rhea" id="RHEA:26426"/>
        <dbReference type="ChEBI" id="CHEBI:15377"/>
        <dbReference type="ChEBI" id="CHEBI:15378"/>
        <dbReference type="ChEBI" id="CHEBI:29985"/>
        <dbReference type="ChEBI" id="CHEBI:30616"/>
        <dbReference type="ChEBI" id="CHEBI:37563"/>
        <dbReference type="ChEBI" id="CHEBI:43474"/>
        <dbReference type="ChEBI" id="CHEBI:46398"/>
        <dbReference type="ChEBI" id="CHEBI:58359"/>
        <dbReference type="ChEBI" id="CHEBI:456216"/>
        <dbReference type="EC" id="6.3.4.2"/>
    </reaction>
</comment>
<comment type="catalytic activity">
    <reaction evidence="1">
        <text>L-glutamine + H2O = L-glutamate + NH4(+)</text>
        <dbReference type="Rhea" id="RHEA:15889"/>
        <dbReference type="ChEBI" id="CHEBI:15377"/>
        <dbReference type="ChEBI" id="CHEBI:28938"/>
        <dbReference type="ChEBI" id="CHEBI:29985"/>
        <dbReference type="ChEBI" id="CHEBI:58359"/>
    </reaction>
</comment>
<comment type="catalytic activity">
    <reaction evidence="1">
        <text>UTP + NH4(+) + ATP = CTP + ADP + phosphate + 2 H(+)</text>
        <dbReference type="Rhea" id="RHEA:16597"/>
        <dbReference type="ChEBI" id="CHEBI:15378"/>
        <dbReference type="ChEBI" id="CHEBI:28938"/>
        <dbReference type="ChEBI" id="CHEBI:30616"/>
        <dbReference type="ChEBI" id="CHEBI:37563"/>
        <dbReference type="ChEBI" id="CHEBI:43474"/>
        <dbReference type="ChEBI" id="CHEBI:46398"/>
        <dbReference type="ChEBI" id="CHEBI:456216"/>
    </reaction>
</comment>
<comment type="activity regulation">
    <text evidence="1">Allosterically activated by GTP, when glutamine is the substrate; GTP has no effect on the reaction when ammonia is the substrate. The allosteric effector GTP functions by stabilizing the protein conformation that binds the tetrahedral intermediate(s) formed during glutamine hydrolysis. Inhibited by the product CTP, via allosteric rather than competitive inhibition.</text>
</comment>
<comment type="pathway">
    <text evidence="1">Pyrimidine metabolism; CTP biosynthesis via de novo pathway; CTP from UDP: step 2/2.</text>
</comment>
<comment type="subunit">
    <text evidence="1">Homotetramer.</text>
</comment>
<comment type="miscellaneous">
    <text evidence="1">CTPSs have evolved a hybrid strategy for distinguishing between UTP and CTP. The overlapping regions of the product feedback inhibitory and substrate sites recognize a common feature in both compounds, the triphosphate moiety. To differentiate isosteric substrate and product pyrimidine rings, an additional pocket far from the expected kinase/ligase catalytic site, specifically recognizes the cytosine and ribose portions of the product inhibitor.</text>
</comment>
<comment type="similarity">
    <text evidence="1">Belongs to the CTP synthase family.</text>
</comment>
<keyword id="KW-0067">ATP-binding</keyword>
<keyword id="KW-0315">Glutamine amidotransferase</keyword>
<keyword id="KW-0436">Ligase</keyword>
<keyword id="KW-0460">Magnesium</keyword>
<keyword id="KW-0479">Metal-binding</keyword>
<keyword id="KW-0547">Nucleotide-binding</keyword>
<keyword id="KW-0665">Pyrimidine biosynthesis</keyword>
<keyword id="KW-1185">Reference proteome</keyword>
<reference key="1">
    <citation type="journal article" date="2012" name="Stand. Genomic Sci.">
        <title>Complete genome sequence of Polynucleobacter necessarius subsp. asymbioticus type strain (QLW-P1DMWA-1(T)).</title>
        <authorList>
            <person name="Meincke L."/>
            <person name="Copeland A."/>
            <person name="Lapidus A."/>
            <person name="Lucas S."/>
            <person name="Berry K.W."/>
            <person name="Del Rio T.G."/>
            <person name="Hammon N."/>
            <person name="Dalin E."/>
            <person name="Tice H."/>
            <person name="Pitluck S."/>
            <person name="Richardson P."/>
            <person name="Bruce D."/>
            <person name="Goodwin L."/>
            <person name="Han C."/>
            <person name="Tapia R."/>
            <person name="Detter J.C."/>
            <person name="Schmutz J."/>
            <person name="Brettin T."/>
            <person name="Larimer F."/>
            <person name="Land M."/>
            <person name="Hauser L."/>
            <person name="Kyrpides N.C."/>
            <person name="Ivanova N."/>
            <person name="Goker M."/>
            <person name="Woyke T."/>
            <person name="Wu Q.L."/>
            <person name="Pockl M."/>
            <person name="Hahn M.W."/>
            <person name="Klenk H.P."/>
        </authorList>
    </citation>
    <scope>NUCLEOTIDE SEQUENCE [LARGE SCALE GENOMIC DNA]</scope>
    <source>
        <strain>DSM 18221 / CIP 109841 / QLW-P1DMWA-1</strain>
    </source>
</reference>
<protein>
    <recommendedName>
        <fullName evidence="1">CTP synthase</fullName>
        <ecNumber evidence="1">6.3.4.2</ecNumber>
    </recommendedName>
    <alternativeName>
        <fullName evidence="1">Cytidine 5'-triphosphate synthase</fullName>
    </alternativeName>
    <alternativeName>
        <fullName evidence="1">Cytidine triphosphate synthetase</fullName>
        <shortName evidence="1">CTP synthetase</shortName>
        <shortName evidence="1">CTPS</shortName>
    </alternativeName>
    <alternativeName>
        <fullName evidence="1">UTP--ammonia ligase</fullName>
    </alternativeName>
</protein>
<gene>
    <name evidence="1" type="primary">pyrG</name>
    <name type="ordered locus">Pnuc_0945</name>
</gene>